<sequence length="394" mass="43657">MSGEDEQQEQTIAEDLVVTKYKMGGDIANRVLRSLVEASSSGVSVLSLCEKGDAMIMEETGKIFKKEKEMKKGIAFPTSISVNNCVCHFSPLKSDQDYILKEGDLVKIDLGVHVDGFIANVAHTFVIGVAQGSQVTGRKADVIKAAHLCAEAALRLVKPGNQNTQVTEAWNKVAHSFNCTPIEGMLSHQLKQHVIDGEKTIIQNPTDQQKKDHEKAEFEVHEVYAVDVLVSSGEGKAKDAGQRTTIYKRDPSKQYGLKMKTSRAFFSEVERRFDAMPFTLRAFEDEKKARMGVVECAKHELLQPFNVLYEKEGEFVAQFKFTVLLMPNGPMRITSGPFEPDLYKSEMEVQDAELKALLQSSASRKTQKKKKKKASKTAENATSGETLEENGAGD</sequence>
<protein>
    <recommendedName>
        <fullName>Proliferation-associated protein 2G4</fullName>
    </recommendedName>
</protein>
<reference key="1">
    <citation type="journal article" date="2004" name="Nature">
        <title>Genome sequence of the Brown Norway rat yields insights into mammalian evolution.</title>
        <authorList>
            <person name="Gibbs R.A."/>
            <person name="Weinstock G.M."/>
            <person name="Metzker M.L."/>
            <person name="Muzny D.M."/>
            <person name="Sodergren E.J."/>
            <person name="Scherer S."/>
            <person name="Scott G."/>
            <person name="Steffen D."/>
            <person name="Worley K.C."/>
            <person name="Burch P.E."/>
            <person name="Okwuonu G."/>
            <person name="Hines S."/>
            <person name="Lewis L."/>
            <person name="Deramo C."/>
            <person name="Delgado O."/>
            <person name="Dugan-Rocha S."/>
            <person name="Miner G."/>
            <person name="Morgan M."/>
            <person name="Hawes A."/>
            <person name="Gill R."/>
            <person name="Holt R.A."/>
            <person name="Adams M.D."/>
            <person name="Amanatides P.G."/>
            <person name="Baden-Tillson H."/>
            <person name="Barnstead M."/>
            <person name="Chin S."/>
            <person name="Evans C.A."/>
            <person name="Ferriera S."/>
            <person name="Fosler C."/>
            <person name="Glodek A."/>
            <person name="Gu Z."/>
            <person name="Jennings D."/>
            <person name="Kraft C.L."/>
            <person name="Nguyen T."/>
            <person name="Pfannkoch C.M."/>
            <person name="Sitter C."/>
            <person name="Sutton G.G."/>
            <person name="Venter J.C."/>
            <person name="Woodage T."/>
            <person name="Smith D."/>
            <person name="Lee H.-M."/>
            <person name="Gustafson E."/>
            <person name="Cahill P."/>
            <person name="Kana A."/>
            <person name="Doucette-Stamm L."/>
            <person name="Weinstock K."/>
            <person name="Fechtel K."/>
            <person name="Weiss R.B."/>
            <person name="Dunn D.M."/>
            <person name="Green E.D."/>
            <person name="Blakesley R.W."/>
            <person name="Bouffard G.G."/>
            <person name="De Jong P.J."/>
            <person name="Osoegawa K."/>
            <person name="Zhu B."/>
            <person name="Marra M."/>
            <person name="Schein J."/>
            <person name="Bosdet I."/>
            <person name="Fjell C."/>
            <person name="Jones S."/>
            <person name="Krzywinski M."/>
            <person name="Mathewson C."/>
            <person name="Siddiqui A."/>
            <person name="Wye N."/>
            <person name="McPherson J."/>
            <person name="Zhao S."/>
            <person name="Fraser C.M."/>
            <person name="Shetty J."/>
            <person name="Shatsman S."/>
            <person name="Geer K."/>
            <person name="Chen Y."/>
            <person name="Abramzon S."/>
            <person name="Nierman W.C."/>
            <person name="Havlak P.H."/>
            <person name="Chen R."/>
            <person name="Durbin K.J."/>
            <person name="Egan A."/>
            <person name="Ren Y."/>
            <person name="Song X.-Z."/>
            <person name="Li B."/>
            <person name="Liu Y."/>
            <person name="Qin X."/>
            <person name="Cawley S."/>
            <person name="Cooney A.J."/>
            <person name="D'Souza L.M."/>
            <person name="Martin K."/>
            <person name="Wu J.Q."/>
            <person name="Gonzalez-Garay M.L."/>
            <person name="Jackson A.R."/>
            <person name="Kalafus K.J."/>
            <person name="McLeod M.P."/>
            <person name="Milosavljevic A."/>
            <person name="Virk D."/>
            <person name="Volkov A."/>
            <person name="Wheeler D.A."/>
            <person name="Zhang Z."/>
            <person name="Bailey J.A."/>
            <person name="Eichler E.E."/>
            <person name="Tuzun E."/>
            <person name="Birney E."/>
            <person name="Mongin E."/>
            <person name="Ureta-Vidal A."/>
            <person name="Woodwark C."/>
            <person name="Zdobnov E."/>
            <person name="Bork P."/>
            <person name="Suyama M."/>
            <person name="Torrents D."/>
            <person name="Alexandersson M."/>
            <person name="Trask B.J."/>
            <person name="Young J.M."/>
            <person name="Huang H."/>
            <person name="Wang H."/>
            <person name="Xing H."/>
            <person name="Daniels S."/>
            <person name="Gietzen D."/>
            <person name="Schmidt J."/>
            <person name="Stevens K."/>
            <person name="Vitt U."/>
            <person name="Wingrove J."/>
            <person name="Camara F."/>
            <person name="Mar Alba M."/>
            <person name="Abril J.F."/>
            <person name="Guigo R."/>
            <person name="Smit A."/>
            <person name="Dubchak I."/>
            <person name="Rubin E.M."/>
            <person name="Couronne O."/>
            <person name="Poliakov A."/>
            <person name="Huebner N."/>
            <person name="Ganten D."/>
            <person name="Goesele C."/>
            <person name="Hummel O."/>
            <person name="Kreitler T."/>
            <person name="Lee Y.-A."/>
            <person name="Monti J."/>
            <person name="Schulz H."/>
            <person name="Zimdahl H."/>
            <person name="Himmelbauer H."/>
            <person name="Lehrach H."/>
            <person name="Jacob H.J."/>
            <person name="Bromberg S."/>
            <person name="Gullings-Handley J."/>
            <person name="Jensen-Seaman M.I."/>
            <person name="Kwitek A.E."/>
            <person name="Lazar J."/>
            <person name="Pasko D."/>
            <person name="Tonellato P.J."/>
            <person name="Twigger S."/>
            <person name="Ponting C.P."/>
            <person name="Duarte J.M."/>
            <person name="Rice S."/>
            <person name="Goodstadt L."/>
            <person name="Beatson S.A."/>
            <person name="Emes R.D."/>
            <person name="Winter E.E."/>
            <person name="Webber C."/>
            <person name="Brandt P."/>
            <person name="Nyakatura G."/>
            <person name="Adetobi M."/>
            <person name="Chiaromonte F."/>
            <person name="Elnitski L."/>
            <person name="Eswara P."/>
            <person name="Hardison R.C."/>
            <person name="Hou M."/>
            <person name="Kolbe D."/>
            <person name="Makova K."/>
            <person name="Miller W."/>
            <person name="Nekrutenko A."/>
            <person name="Riemer C."/>
            <person name="Schwartz S."/>
            <person name="Taylor J."/>
            <person name="Yang S."/>
            <person name="Zhang Y."/>
            <person name="Lindpaintner K."/>
            <person name="Andrews T.D."/>
            <person name="Caccamo M."/>
            <person name="Clamp M."/>
            <person name="Clarke L."/>
            <person name="Curwen V."/>
            <person name="Durbin R.M."/>
            <person name="Eyras E."/>
            <person name="Searle S.M."/>
            <person name="Cooper G.M."/>
            <person name="Batzoglou S."/>
            <person name="Brudno M."/>
            <person name="Sidow A."/>
            <person name="Stone E.A."/>
            <person name="Payseur B.A."/>
            <person name="Bourque G."/>
            <person name="Lopez-Otin C."/>
            <person name="Puente X.S."/>
            <person name="Chakrabarti K."/>
            <person name="Chatterji S."/>
            <person name="Dewey C."/>
            <person name="Pachter L."/>
            <person name="Bray N."/>
            <person name="Yap V.B."/>
            <person name="Caspi A."/>
            <person name="Tesler G."/>
            <person name="Pevzner P.A."/>
            <person name="Haussler D."/>
            <person name="Roskin K.M."/>
            <person name="Baertsch R."/>
            <person name="Clawson H."/>
            <person name="Furey T.S."/>
            <person name="Hinrichs A.S."/>
            <person name="Karolchik D."/>
            <person name="Kent W.J."/>
            <person name="Rosenbloom K.R."/>
            <person name="Trumbower H."/>
            <person name="Weirauch M."/>
            <person name="Cooper D.N."/>
            <person name="Stenson P.D."/>
            <person name="Ma B."/>
            <person name="Brent M."/>
            <person name="Arumugam M."/>
            <person name="Shteynberg D."/>
            <person name="Copley R.R."/>
            <person name="Taylor M.S."/>
            <person name="Riethman H."/>
            <person name="Mudunuri U."/>
            <person name="Peterson J."/>
            <person name="Guyer M."/>
            <person name="Felsenfeld A."/>
            <person name="Old S."/>
            <person name="Mockrin S."/>
            <person name="Collins F.S."/>
        </authorList>
    </citation>
    <scope>NUCLEOTIDE SEQUENCE [LARGE SCALE GENOMIC DNA]</scope>
    <source>
        <strain>Brown Norway</strain>
    </source>
</reference>
<reference key="2">
    <citation type="submission" date="2005-09" db="EMBL/GenBank/DDBJ databases">
        <authorList>
            <person name="Mural R.J."/>
            <person name="Li P.W."/>
            <person name="Adams M.D."/>
            <person name="Amanatides P.G."/>
            <person name="Baden-Tillson H."/>
            <person name="Barnstead M."/>
            <person name="Chin S.H."/>
            <person name="Dew I."/>
            <person name="Evans C.A."/>
            <person name="Ferriera S."/>
            <person name="Flanigan M."/>
            <person name="Fosler C."/>
            <person name="Glodek A."/>
            <person name="Gu Z."/>
            <person name="Holt R.A."/>
            <person name="Jennings D."/>
            <person name="Kraft C.L."/>
            <person name="Lu F."/>
            <person name="Nguyen T."/>
            <person name="Nusskern D.R."/>
            <person name="Pfannkoch C.M."/>
            <person name="Sitter C."/>
            <person name="Sutton G.G."/>
            <person name="Venter J.C."/>
            <person name="Wang Z."/>
            <person name="Woodage T."/>
            <person name="Zheng X.H."/>
            <person name="Zhong F."/>
        </authorList>
    </citation>
    <scope>NUCLEOTIDE SEQUENCE [LARGE SCALE GENOMIC DNA]</scope>
    <source>
        <strain>Brown Norway</strain>
    </source>
</reference>
<reference key="3">
    <citation type="journal article" date="2004" name="Genome Res.">
        <title>The status, quality, and expansion of the NIH full-length cDNA project: the Mammalian Gene Collection (MGC).</title>
        <authorList>
            <consortium name="The MGC Project Team"/>
        </authorList>
    </citation>
    <scope>NUCLEOTIDE SEQUENCE [LARGE SCALE MRNA] (ISOFORM 1)</scope>
    <source>
        <tissue>Lung</tissue>
    </source>
</reference>
<reference key="4">
    <citation type="journal article" date="2006" name="Proc. Natl. Acad. Sci. U.S.A.">
        <title>Ebp1 isoforms distinctively regulate cell survival and differentiation.</title>
        <authorList>
            <person name="Liu Z."/>
            <person name="Ahn J.Y."/>
            <person name="Liu X."/>
            <person name="Ye K."/>
        </authorList>
    </citation>
    <scope>ALTERNATIVE SPLICING (ISOFORMS 1 AND 2)</scope>
    <scope>FUNCTION</scope>
    <scope>SUBCELLULAR LOCATION</scope>
    <scope>INTERACTION WITH AKT1</scope>
</reference>
<reference key="5">
    <citation type="journal article" date="2012" name="Nat. Commun.">
        <title>Quantitative maps of protein phosphorylation sites across 14 different rat organs and tissues.</title>
        <authorList>
            <person name="Lundby A."/>
            <person name="Secher A."/>
            <person name="Lage K."/>
            <person name="Nordsborg N.B."/>
            <person name="Dmytriyev A."/>
            <person name="Lundby C."/>
            <person name="Olsen J.V."/>
        </authorList>
    </citation>
    <scope>PHOSPHORYLATION [LARGE SCALE ANALYSIS] AT SER-2</scope>
    <scope>IDENTIFICATION BY MASS SPECTROMETRY [LARGE SCALE ANALYSIS]</scope>
</reference>
<gene>
    <name type="primary">Pa2g4</name>
</gene>
<accession>Q6AYD3</accession>
<keyword id="KW-0007">Acetylation</keyword>
<keyword id="KW-0025">Alternative splicing</keyword>
<keyword id="KW-0963">Cytoplasm</keyword>
<keyword id="KW-1017">Isopeptide bond</keyword>
<keyword id="KW-0539">Nucleus</keyword>
<keyword id="KW-0597">Phosphoprotein</keyword>
<keyword id="KW-1185">Reference proteome</keyword>
<keyword id="KW-0678">Repressor</keyword>
<keyword id="KW-0687">Ribonucleoprotein</keyword>
<keyword id="KW-0694">RNA-binding</keyword>
<keyword id="KW-0698">rRNA processing</keyword>
<keyword id="KW-0804">Transcription</keyword>
<keyword id="KW-0805">Transcription regulation</keyword>
<keyword id="KW-0810">Translation regulation</keyword>
<keyword id="KW-0832">Ubl conjugation</keyword>
<proteinExistence type="evidence at protein level"/>
<dbReference type="EMBL" id="AABR06047173">
    <property type="status" value="NOT_ANNOTATED_CDS"/>
    <property type="molecule type" value="Genomic_DNA"/>
</dbReference>
<dbReference type="EMBL" id="CH474104">
    <property type="protein sequence ID" value="EDL84836.1"/>
    <property type="molecule type" value="Genomic_DNA"/>
</dbReference>
<dbReference type="EMBL" id="BC079095">
    <property type="protein sequence ID" value="AAH79095.1"/>
    <property type="molecule type" value="mRNA"/>
</dbReference>
<dbReference type="RefSeq" id="NP_001004206.1">
    <molecule id="Q6AYD3-1"/>
    <property type="nucleotide sequence ID" value="NM_001004206.1"/>
</dbReference>
<dbReference type="SMR" id="Q6AYD3"/>
<dbReference type="FunCoup" id="Q6AYD3">
    <property type="interactions" value="3968"/>
</dbReference>
<dbReference type="IntAct" id="Q6AYD3">
    <property type="interactions" value="3"/>
</dbReference>
<dbReference type="MINT" id="Q6AYD3"/>
<dbReference type="STRING" id="10116.ENSRNOP00000006578"/>
<dbReference type="MEROPS" id="M24.978"/>
<dbReference type="iPTMnet" id="Q6AYD3"/>
<dbReference type="PhosphoSitePlus" id="Q6AYD3"/>
<dbReference type="jPOST" id="Q6AYD3"/>
<dbReference type="PaxDb" id="10116-ENSRNOP00000006578"/>
<dbReference type="Ensembl" id="ENSRNOT00000096142.1">
    <molecule id="Q6AYD3-1"/>
    <property type="protein sequence ID" value="ENSRNOP00000091838.1"/>
    <property type="gene ID" value="ENSRNOG00000004904.6"/>
</dbReference>
<dbReference type="GeneID" id="288778"/>
<dbReference type="KEGG" id="rno:288778"/>
<dbReference type="UCSC" id="RGD:1302994">
    <molecule id="Q6AYD3-1"/>
    <property type="organism name" value="rat"/>
</dbReference>
<dbReference type="AGR" id="RGD:1302994"/>
<dbReference type="CTD" id="5036"/>
<dbReference type="RGD" id="1302994">
    <property type="gene designation" value="Pa2g4"/>
</dbReference>
<dbReference type="eggNOG" id="KOG2776">
    <property type="taxonomic scope" value="Eukaryota"/>
</dbReference>
<dbReference type="GeneTree" id="ENSGT00940000154281"/>
<dbReference type="HOGENOM" id="CLU_041451_2_1_1"/>
<dbReference type="InParanoid" id="Q6AYD3"/>
<dbReference type="OMA" id="MAIQECA"/>
<dbReference type="OrthoDB" id="5876363at2759"/>
<dbReference type="PhylomeDB" id="Q6AYD3"/>
<dbReference type="TreeFam" id="TF300010"/>
<dbReference type="Reactome" id="R-RNO-6798695">
    <property type="pathway name" value="Neutrophil degranulation"/>
</dbReference>
<dbReference type="PRO" id="PR:Q6AYD3"/>
<dbReference type="Proteomes" id="UP000002494">
    <property type="component" value="Chromosome 7"/>
</dbReference>
<dbReference type="Proteomes" id="UP000234681">
    <property type="component" value="Chromosome 7"/>
</dbReference>
<dbReference type="Bgee" id="ENSRNOG00000004904">
    <property type="expression patterns" value="Expressed in thymus and 20 other cell types or tissues"/>
</dbReference>
<dbReference type="ExpressionAtlas" id="Q6AYD3">
    <property type="expression patterns" value="baseline and differential"/>
</dbReference>
<dbReference type="GO" id="GO:0005737">
    <property type="term" value="C:cytoplasm"/>
    <property type="evidence" value="ECO:0000314"/>
    <property type="project" value="UniProtKB"/>
</dbReference>
<dbReference type="GO" id="GO:0005730">
    <property type="term" value="C:nucleolus"/>
    <property type="evidence" value="ECO:0000314"/>
    <property type="project" value="UniProtKB"/>
</dbReference>
<dbReference type="GO" id="GO:0005634">
    <property type="term" value="C:nucleus"/>
    <property type="evidence" value="ECO:0000266"/>
    <property type="project" value="RGD"/>
</dbReference>
<dbReference type="GO" id="GO:1990904">
    <property type="term" value="C:ribonucleoprotein complex"/>
    <property type="evidence" value="ECO:0007669"/>
    <property type="project" value="UniProtKB-KW"/>
</dbReference>
<dbReference type="GO" id="GO:0003676">
    <property type="term" value="F:nucleic acid binding"/>
    <property type="evidence" value="ECO:0000266"/>
    <property type="project" value="RGD"/>
</dbReference>
<dbReference type="GO" id="GO:0003723">
    <property type="term" value="F:RNA binding"/>
    <property type="evidence" value="ECO:0007669"/>
    <property type="project" value="UniProtKB-KW"/>
</dbReference>
<dbReference type="GO" id="GO:0003714">
    <property type="term" value="F:transcription corepressor activity"/>
    <property type="evidence" value="ECO:0000266"/>
    <property type="project" value="RGD"/>
</dbReference>
<dbReference type="GO" id="GO:0031625">
    <property type="term" value="F:ubiquitin protein ligase binding"/>
    <property type="evidence" value="ECO:0000266"/>
    <property type="project" value="RGD"/>
</dbReference>
<dbReference type="GO" id="GO:0043066">
    <property type="term" value="P:negative regulation of apoptotic process"/>
    <property type="evidence" value="ECO:0000314"/>
    <property type="project" value="UniProtKB"/>
</dbReference>
<dbReference type="GO" id="GO:0045892">
    <property type="term" value="P:negative regulation of DNA-templated transcription"/>
    <property type="evidence" value="ECO:0000266"/>
    <property type="project" value="RGD"/>
</dbReference>
<dbReference type="GO" id="GO:0045597">
    <property type="term" value="P:positive regulation of cell differentiation"/>
    <property type="evidence" value="ECO:0000314"/>
    <property type="project" value="UniProtKB"/>
</dbReference>
<dbReference type="GO" id="GO:0006417">
    <property type="term" value="P:regulation of translation"/>
    <property type="evidence" value="ECO:0007669"/>
    <property type="project" value="UniProtKB-KW"/>
</dbReference>
<dbReference type="GO" id="GO:0006364">
    <property type="term" value="P:rRNA processing"/>
    <property type="evidence" value="ECO:0007669"/>
    <property type="project" value="UniProtKB-KW"/>
</dbReference>
<dbReference type="CDD" id="cd01089">
    <property type="entry name" value="PA2G4-like"/>
    <property type="match status" value="1"/>
</dbReference>
<dbReference type="FunFam" id="1.10.10.10:FF:000029">
    <property type="entry name" value="Proliferation-associated 2G4, a"/>
    <property type="match status" value="1"/>
</dbReference>
<dbReference type="FunFam" id="3.90.230.10:FF:000008">
    <property type="entry name" value="Proliferation-associated 2G4, b"/>
    <property type="match status" value="1"/>
</dbReference>
<dbReference type="FunFam" id="3.90.230.10:FF:000031">
    <property type="entry name" value="Proliferation-associated 2G4-like protein"/>
    <property type="match status" value="1"/>
</dbReference>
<dbReference type="Gene3D" id="3.90.230.10">
    <property type="entry name" value="Creatinase/methionine aminopeptidase superfamily"/>
    <property type="match status" value="1"/>
</dbReference>
<dbReference type="Gene3D" id="1.10.10.10">
    <property type="entry name" value="Winged helix-like DNA-binding domain superfamily/Winged helix DNA-binding domain"/>
    <property type="match status" value="1"/>
</dbReference>
<dbReference type="InterPro" id="IPR036005">
    <property type="entry name" value="Creatinase/aminopeptidase-like"/>
</dbReference>
<dbReference type="InterPro" id="IPR004545">
    <property type="entry name" value="PA2G4"/>
</dbReference>
<dbReference type="InterPro" id="IPR047113">
    <property type="entry name" value="PA2G4/ARX1"/>
</dbReference>
<dbReference type="InterPro" id="IPR000994">
    <property type="entry name" value="Pept_M24"/>
</dbReference>
<dbReference type="InterPro" id="IPR018349">
    <property type="entry name" value="Pept_M24A_MAP2_BS"/>
</dbReference>
<dbReference type="InterPro" id="IPR036388">
    <property type="entry name" value="WH-like_DNA-bd_sf"/>
</dbReference>
<dbReference type="InterPro" id="IPR036390">
    <property type="entry name" value="WH_DNA-bd_sf"/>
</dbReference>
<dbReference type="NCBIfam" id="TIGR00495">
    <property type="entry name" value="crvDNA_42K"/>
    <property type="match status" value="1"/>
</dbReference>
<dbReference type="PANTHER" id="PTHR10804:SF11">
    <property type="entry name" value="PROLIFERATION-ASSOCIATED PROTEIN 2G4"/>
    <property type="match status" value="1"/>
</dbReference>
<dbReference type="PANTHER" id="PTHR10804">
    <property type="entry name" value="PROTEASE FAMILY M24 METHIONYL AMINOPEPTIDASE, AMINOPEPTIDASE P"/>
    <property type="match status" value="1"/>
</dbReference>
<dbReference type="Pfam" id="PF00557">
    <property type="entry name" value="Peptidase_M24"/>
    <property type="match status" value="1"/>
</dbReference>
<dbReference type="SUPFAM" id="SSF55920">
    <property type="entry name" value="Creatinase/aminopeptidase"/>
    <property type="match status" value="1"/>
</dbReference>
<dbReference type="SUPFAM" id="SSF46785">
    <property type="entry name" value="Winged helix' DNA-binding domain"/>
    <property type="match status" value="1"/>
</dbReference>
<dbReference type="PROSITE" id="PS01202">
    <property type="entry name" value="MAP_2"/>
    <property type="match status" value="1"/>
</dbReference>
<feature type="initiator methionine" description="Removed" evidence="2">
    <location>
        <position position="1"/>
    </location>
</feature>
<feature type="chain" id="PRO_0000431530" description="Proliferation-associated protein 2G4">
    <location>
        <begin position="2"/>
        <end position="394"/>
    </location>
</feature>
<feature type="region of interest" description="Necessary for nucleolar localization" evidence="2">
    <location>
        <begin position="2"/>
        <end position="48"/>
    </location>
</feature>
<feature type="region of interest" description="RNA-binding" evidence="2">
    <location>
        <begin position="46"/>
        <end position="54"/>
    </location>
</feature>
<feature type="region of interest" description="Necessary for nucleolar localization" evidence="2">
    <location>
        <begin position="301"/>
        <end position="394"/>
    </location>
</feature>
<feature type="region of interest" description="Disordered" evidence="3">
    <location>
        <begin position="358"/>
        <end position="394"/>
    </location>
</feature>
<feature type="region of interest" description="Interaction with RNA" evidence="1">
    <location>
        <begin position="361"/>
        <end position="375"/>
    </location>
</feature>
<feature type="compositionally biased region" description="Basic residues" evidence="3">
    <location>
        <begin position="365"/>
        <end position="375"/>
    </location>
</feature>
<feature type="modified residue" description="N-acetylserine" evidence="2">
    <location>
        <position position="2"/>
    </location>
</feature>
<feature type="modified residue" description="Phosphoserine" evidence="7">
    <location>
        <position position="2"/>
    </location>
</feature>
<feature type="modified residue" description="Phosphoserine" evidence="2">
    <location>
        <position position="335"/>
    </location>
</feature>
<feature type="modified residue" description="Phosphoserine; by PKC/PRKCD" evidence="2">
    <location>
        <position position="361"/>
    </location>
</feature>
<feature type="modified residue" description="Phosphothreonine" evidence="2">
    <location>
        <position position="366"/>
    </location>
</feature>
<feature type="modified residue" description="Phosphothreonine" evidence="2">
    <location>
        <position position="386"/>
    </location>
</feature>
<feature type="cross-link" description="Glycyl lysine isopeptide (Lys-Gly) (interchain with G-Cter in SUMO2)" evidence="2">
    <location>
        <position position="298"/>
    </location>
</feature>
<feature type="splice variant" id="VSP_057324" description="In isoform 2." evidence="4">
    <location>
        <begin position="1"/>
        <end position="54"/>
    </location>
</feature>
<comment type="function">
    <text evidence="1 2 5">May play a role in a ERBB3-regulated signal transduction pathway. Seems be involved in growth regulation. Acts a corepressor of the androgen receptor (AR) and is regulated by the ERBB3 ligand neuregulin-1/heregulin (HRG). Inhibits transcription of some E2F1-regulated promoters, probably by recruiting histone acetylase (HAT) activity. Binds RNA. Associates with 28S, 18S and 5.8S mature rRNAs, several rRNA precursors and probably U3 small nucleolar RNA. May be involved in regulation of intermediate and late steps of rRNA processing. May be involved in ribosome assembly. Mediates cap-independent translation of specific viral IRESs (internal ribosomal entry site). Together with PTBP1 is required for the translation initiation on the foot-and-mouth disease virus (FMDV) IRES (By similarity). Regulates cell proliferation, differentiation, and survival. Isoform 1 suppresses apoptosis whereas isoform 2 promotes cell differentiation.</text>
</comment>
<comment type="subunit">
    <text evidence="2 4">Isoform 2 interacts with the cytoplasmic domain of non-phosphorylated ERBB3; the interaction requires PKC activity. Interacts with AR. Treatment with HRG leads to dissociation from ERBB3 and increases association with AR. Interacts with nucleolin/NCL. Component of a ribonucleoprotein complex containing at least PA2G4, NCL, TOP1, PABPC2, RPLP0, acetylated histone H1 (HIST1H1A or H1F1), histone H1 2/4, RPL4, RPL8, RPL15, RPL18, RPL18A, RPL21, RPL11, RPL12, RPL28, RPL27, RPLP2 and RPL24. Interacts with HDAC2. Interacts with RB1; the interaction is enhanced upon PA2G4 dephosphorylation (By similarity). Isoform 1 and isoform 2 interact with RNF20 (By similarity). Isoform 2 interacts with HUWE1 (By similarity). Interacts with AKT1. Interacts with DNAJC21 (By similarity).</text>
</comment>
<comment type="subcellular location">
    <molecule>Isoform 1</molecule>
    <subcellularLocation>
        <location evidence="4">Cytoplasm</location>
    </subcellularLocation>
    <subcellularLocation>
        <location evidence="4">Nucleus</location>
        <location evidence="4">Nucleolus</location>
    </subcellularLocation>
    <text evidence="2">Phosphorylation at Ser-361 by PKC/PRKCD regulates its nucleolar localization.</text>
</comment>
<comment type="subcellular location">
    <molecule>Isoform 2</molecule>
    <subcellularLocation>
        <location evidence="4">Cytoplasm</location>
    </subcellularLocation>
</comment>
<comment type="alternative products">
    <event type="alternative splicing"/>
    <isoform>
        <id>Q6AYD3-1</id>
        <name evidence="6">1</name>
        <name evidence="4">p48</name>
        <sequence type="displayed"/>
    </isoform>
    <isoform>
        <id>Q6AYD3-2</id>
        <name evidence="6">2</name>
        <name evidence="4">p42</name>
        <sequence type="described" ref="VSP_057324"/>
    </isoform>
</comment>
<comment type="PTM">
    <text evidence="2">Phosphorylated on serine and threonine residues. Phosphorylation is enhanced by HRG treatment. Basal phosphorylation is PKC-dependent and HRG-induced phosphorylation is predominantly PKC-independent. Phosphorylation at Ser-361 by PKC/PRKCD regulates its nucleolar localization.</text>
</comment>
<comment type="PTM">
    <text evidence="2">Isoform 2 is polyubiquitinated, leading to proteasomal degradation and phosphorylation by PKC/PRKCD enhances polyubiquitination.</text>
</comment>
<comment type="similarity">
    <text evidence="6">Belongs to the peptidase M24 family.</text>
</comment>
<organism>
    <name type="scientific">Rattus norvegicus</name>
    <name type="common">Rat</name>
    <dbReference type="NCBI Taxonomy" id="10116"/>
    <lineage>
        <taxon>Eukaryota</taxon>
        <taxon>Metazoa</taxon>
        <taxon>Chordata</taxon>
        <taxon>Craniata</taxon>
        <taxon>Vertebrata</taxon>
        <taxon>Euteleostomi</taxon>
        <taxon>Mammalia</taxon>
        <taxon>Eutheria</taxon>
        <taxon>Euarchontoglires</taxon>
        <taxon>Glires</taxon>
        <taxon>Rodentia</taxon>
        <taxon>Myomorpha</taxon>
        <taxon>Muroidea</taxon>
        <taxon>Muridae</taxon>
        <taxon>Murinae</taxon>
        <taxon>Rattus</taxon>
    </lineage>
</organism>
<evidence type="ECO:0000250" key="1">
    <source>
        <dbReference type="UniProtKB" id="P50580"/>
    </source>
</evidence>
<evidence type="ECO:0000250" key="2">
    <source>
        <dbReference type="UniProtKB" id="Q9UQ80"/>
    </source>
</evidence>
<evidence type="ECO:0000256" key="3">
    <source>
        <dbReference type="SAM" id="MobiDB-lite"/>
    </source>
</evidence>
<evidence type="ECO:0000269" key="4">
    <source>
    </source>
</evidence>
<evidence type="ECO:0000303" key="5">
    <source>
    </source>
</evidence>
<evidence type="ECO:0000305" key="6"/>
<evidence type="ECO:0007744" key="7">
    <source>
    </source>
</evidence>
<name>PA2G4_RAT</name>